<name>PAX9_CHICK</name>
<feature type="chain" id="PRO_0000050214" description="Paired box protein Pax-9">
    <location>
        <begin position="1" status="less than"/>
        <end position="339"/>
    </location>
</feature>
<feature type="DNA-binding region" description="Paired" evidence="1">
    <location>
        <begin position="2"/>
        <end position="128"/>
    </location>
</feature>
<feature type="region of interest" description="PAI subdomain" evidence="1">
    <location>
        <begin position="5"/>
        <end position="61"/>
    </location>
</feature>
<feature type="region of interest" description="RED subdomain" evidence="1">
    <location>
        <begin position="80"/>
        <end position="128"/>
    </location>
</feature>
<feature type="non-terminal residue">
    <location>
        <position position="1"/>
    </location>
</feature>
<dbReference type="EMBL" id="X92652">
    <property type="protein sequence ID" value="CAA63343.1"/>
    <property type="molecule type" value="mRNA"/>
</dbReference>
<dbReference type="SMR" id="P55166"/>
<dbReference type="FunCoup" id="P55166">
    <property type="interactions" value="170"/>
</dbReference>
<dbReference type="STRING" id="9031.ENSGALP00000037011"/>
<dbReference type="GlyGen" id="P55166">
    <property type="glycosylation" value="1 site"/>
</dbReference>
<dbReference type="PaxDb" id="9031-ENSGALP00000037011"/>
<dbReference type="VEuPathDB" id="HostDB:geneid_395740"/>
<dbReference type="eggNOG" id="KOG3517">
    <property type="taxonomic scope" value="Eukaryota"/>
</dbReference>
<dbReference type="InParanoid" id="P55166"/>
<dbReference type="OrthoDB" id="3225452at2759"/>
<dbReference type="Proteomes" id="UP000000539">
    <property type="component" value="Unassembled WGS sequence"/>
</dbReference>
<dbReference type="GO" id="GO:0005634">
    <property type="term" value="C:nucleus"/>
    <property type="evidence" value="ECO:0007669"/>
    <property type="project" value="UniProtKB-SubCell"/>
</dbReference>
<dbReference type="GO" id="GO:0000981">
    <property type="term" value="F:DNA-binding transcription factor activity, RNA polymerase II-specific"/>
    <property type="evidence" value="ECO:0000318"/>
    <property type="project" value="GO_Central"/>
</dbReference>
<dbReference type="GO" id="GO:0000978">
    <property type="term" value="F:RNA polymerase II cis-regulatory region sequence-specific DNA binding"/>
    <property type="evidence" value="ECO:0000318"/>
    <property type="project" value="GO_Central"/>
</dbReference>
<dbReference type="GO" id="GO:0006357">
    <property type="term" value="P:regulation of transcription by RNA polymerase II"/>
    <property type="evidence" value="ECO:0000318"/>
    <property type="project" value="GO_Central"/>
</dbReference>
<dbReference type="CDD" id="cd00131">
    <property type="entry name" value="PAX"/>
    <property type="match status" value="1"/>
</dbReference>
<dbReference type="FunFam" id="1.10.10.10:FF:000003">
    <property type="entry name" value="Paired box protein Pax-6"/>
    <property type="match status" value="1"/>
</dbReference>
<dbReference type="FunFam" id="1.10.10.10:FF:000084">
    <property type="entry name" value="paired box protein Pax-9"/>
    <property type="match status" value="1"/>
</dbReference>
<dbReference type="Gene3D" id="1.10.10.10">
    <property type="entry name" value="Winged helix-like DNA-binding domain superfamily/Winged helix DNA-binding domain"/>
    <property type="match status" value="2"/>
</dbReference>
<dbReference type="InterPro" id="IPR009057">
    <property type="entry name" value="Homeodomain-like_sf"/>
</dbReference>
<dbReference type="InterPro" id="IPR043182">
    <property type="entry name" value="PAIRED_DNA-bd_dom"/>
</dbReference>
<dbReference type="InterPro" id="IPR001523">
    <property type="entry name" value="Paired_dom"/>
</dbReference>
<dbReference type="InterPro" id="IPR043565">
    <property type="entry name" value="PAX_fam"/>
</dbReference>
<dbReference type="InterPro" id="IPR036388">
    <property type="entry name" value="WH-like_DNA-bd_sf"/>
</dbReference>
<dbReference type="PANTHER" id="PTHR45636">
    <property type="entry name" value="PAIRED BOX PROTEIN PAX-6-RELATED-RELATED"/>
    <property type="match status" value="1"/>
</dbReference>
<dbReference type="PANTHER" id="PTHR45636:SF13">
    <property type="entry name" value="PAIRED BOX PROTEIN PAX-9"/>
    <property type="match status" value="1"/>
</dbReference>
<dbReference type="Pfam" id="PF00292">
    <property type="entry name" value="PAX"/>
    <property type="match status" value="1"/>
</dbReference>
<dbReference type="PRINTS" id="PR00027">
    <property type="entry name" value="PAIREDBOX"/>
</dbReference>
<dbReference type="SMART" id="SM00351">
    <property type="entry name" value="PAX"/>
    <property type="match status" value="1"/>
</dbReference>
<dbReference type="SUPFAM" id="SSF46689">
    <property type="entry name" value="Homeodomain-like"/>
    <property type="match status" value="1"/>
</dbReference>
<dbReference type="PROSITE" id="PS00034">
    <property type="entry name" value="PAIRED_1"/>
    <property type="match status" value="1"/>
</dbReference>
<dbReference type="PROSITE" id="PS51057">
    <property type="entry name" value="PAIRED_2"/>
    <property type="match status" value="1"/>
</dbReference>
<comment type="subcellular location">
    <subcellularLocation>
        <location>Nucleus</location>
    </subcellularLocation>
</comment>
<protein>
    <recommendedName>
        <fullName>Paired box protein Pax-9</fullName>
    </recommendedName>
</protein>
<keyword id="KW-0217">Developmental protein</keyword>
<keyword id="KW-0238">DNA-binding</keyword>
<keyword id="KW-0539">Nucleus</keyword>
<keyword id="KW-0563">Paired box</keyword>
<keyword id="KW-1185">Reference proteome</keyword>
<keyword id="KW-0804">Transcription</keyword>
<keyword id="KW-0805">Transcription regulation</keyword>
<evidence type="ECO:0000255" key="1">
    <source>
        <dbReference type="PROSITE-ProRule" id="PRU00381"/>
    </source>
</evidence>
<accession>P55166</accession>
<organism>
    <name type="scientific">Gallus gallus</name>
    <name type="common">Chicken</name>
    <dbReference type="NCBI Taxonomy" id="9031"/>
    <lineage>
        <taxon>Eukaryota</taxon>
        <taxon>Metazoa</taxon>
        <taxon>Chordata</taxon>
        <taxon>Craniata</taxon>
        <taxon>Vertebrata</taxon>
        <taxon>Euteleostomi</taxon>
        <taxon>Archelosauria</taxon>
        <taxon>Archosauria</taxon>
        <taxon>Dinosauria</taxon>
        <taxon>Saurischia</taxon>
        <taxon>Theropoda</taxon>
        <taxon>Coelurosauria</taxon>
        <taxon>Aves</taxon>
        <taxon>Neognathae</taxon>
        <taxon>Galloanserae</taxon>
        <taxon>Galliformes</taxon>
        <taxon>Phasianidae</taxon>
        <taxon>Phasianinae</taxon>
        <taxon>Gallus</taxon>
    </lineage>
</organism>
<sequence>PAFGEVNQLGGVFVNGRPLPNAIRLRIVELAQLGIRPCDISRQLRVSHGCVSKILARYNETGSILPGAIGGSKPRVTTPTVVKHIRTYKQRDPGIFAWEIRDRLLADGVCDKYNVPSVSSISRILRNKIGNLSQQGHYESYKQHQPPPQPPLPYNHIYSYPSPIAAAGAKVPTPPGVPAIPGTMAMPRTWPSSHSVTDILGIRSITDQVSDTSSYPSPKVEEWSSLGRSSFPPAAQHAVNGLEKSSLEQEAKYSQAHNGLPAVGSFVSAPAMSPYATSAQVSPYMPYSAAPSSYMAGHGWQHTAGTPLSPHGCDLPASLAFKGVQTAREGSHSVTASAL</sequence>
<reference key="1">
    <citation type="journal article" date="1996" name="Dev. Biol.">
        <title>Expression of avian Pax1 and Pax9 is intrinsically regulated in the pharyngeal endoderm, but depends on environmental influences in the paraxial mesoderm.</title>
        <authorList>
            <person name="Mueller T.S."/>
            <person name="Ebensperger C."/>
            <person name="Neubueser A."/>
            <person name="Koseki H."/>
            <person name="Balling R."/>
            <person name="Christ B."/>
            <person name="Wilting J."/>
        </authorList>
    </citation>
    <scope>NUCLEOTIDE SEQUENCE [MRNA]</scope>
</reference>
<proteinExistence type="evidence at transcript level"/>
<gene>
    <name type="primary">PAX9</name>
</gene>